<accession>Q87TF6</accession>
<dbReference type="EMBL" id="BA000031">
    <property type="protein sequence ID" value="BAC58376.1"/>
    <property type="molecule type" value="Genomic_DNA"/>
</dbReference>
<dbReference type="RefSeq" id="NP_796492.1">
    <property type="nucleotide sequence ID" value="NC_004603.1"/>
</dbReference>
<dbReference type="RefSeq" id="WP_005478647.1">
    <property type="nucleotide sequence ID" value="NC_004603.1"/>
</dbReference>
<dbReference type="SMR" id="Q87TF6"/>
<dbReference type="GeneID" id="1187580"/>
<dbReference type="KEGG" id="vpa:VP0113"/>
<dbReference type="PATRIC" id="fig|223926.6.peg.104"/>
<dbReference type="eggNOG" id="COG3078">
    <property type="taxonomic scope" value="Bacteria"/>
</dbReference>
<dbReference type="HOGENOM" id="CLU_094104_1_0_6"/>
<dbReference type="Proteomes" id="UP000002493">
    <property type="component" value="Chromosome 1"/>
</dbReference>
<dbReference type="GO" id="GO:0005096">
    <property type="term" value="F:GTPase activator activity"/>
    <property type="evidence" value="ECO:0007669"/>
    <property type="project" value="UniProtKB-KW"/>
</dbReference>
<dbReference type="GO" id="GO:0042254">
    <property type="term" value="P:ribosome biogenesis"/>
    <property type="evidence" value="ECO:0007669"/>
    <property type="project" value="UniProtKB-KW"/>
</dbReference>
<dbReference type="HAMAP" id="MF_01058">
    <property type="entry name" value="GAP_YihI"/>
    <property type="match status" value="1"/>
</dbReference>
<dbReference type="InterPro" id="IPR007336">
    <property type="entry name" value="YihI"/>
</dbReference>
<dbReference type="NCBIfam" id="NF003560">
    <property type="entry name" value="PRK05244.1-1"/>
    <property type="match status" value="1"/>
</dbReference>
<dbReference type="Pfam" id="PF04220">
    <property type="entry name" value="YihI"/>
    <property type="match status" value="1"/>
</dbReference>
<gene>
    <name evidence="1" type="primary">yihI</name>
    <name type="ordered locus">VP0113</name>
</gene>
<proteinExistence type="inferred from homology"/>
<feature type="chain" id="PRO_0000209596" description="Der GTPase-activating protein YihI">
    <location>
        <begin position="1"/>
        <end position="180"/>
    </location>
</feature>
<feature type="region of interest" description="Disordered" evidence="2">
    <location>
        <begin position="1"/>
        <end position="87"/>
    </location>
</feature>
<feature type="region of interest" description="Disordered" evidence="2">
    <location>
        <begin position="142"/>
        <end position="180"/>
    </location>
</feature>
<feature type="compositionally biased region" description="Basic and acidic residues" evidence="2">
    <location>
        <begin position="23"/>
        <end position="32"/>
    </location>
</feature>
<feature type="compositionally biased region" description="Basic residues" evidence="2">
    <location>
        <begin position="33"/>
        <end position="43"/>
    </location>
</feature>
<feature type="compositionally biased region" description="Basic and acidic residues" evidence="2">
    <location>
        <begin position="51"/>
        <end position="68"/>
    </location>
</feature>
<feature type="compositionally biased region" description="Acidic residues" evidence="2">
    <location>
        <begin position="165"/>
        <end position="180"/>
    </location>
</feature>
<protein>
    <recommendedName>
        <fullName evidence="1">Der GTPase-activating protein YihI</fullName>
    </recommendedName>
</protein>
<reference key="1">
    <citation type="journal article" date="2003" name="Lancet">
        <title>Genome sequence of Vibrio parahaemolyticus: a pathogenic mechanism distinct from that of V. cholerae.</title>
        <authorList>
            <person name="Makino K."/>
            <person name="Oshima K."/>
            <person name="Kurokawa K."/>
            <person name="Yokoyama K."/>
            <person name="Uda T."/>
            <person name="Tagomori K."/>
            <person name="Iijima Y."/>
            <person name="Najima M."/>
            <person name="Nakano M."/>
            <person name="Yamashita A."/>
            <person name="Kubota Y."/>
            <person name="Kimura S."/>
            <person name="Yasunaga T."/>
            <person name="Honda T."/>
            <person name="Shinagawa H."/>
            <person name="Hattori M."/>
            <person name="Iida T."/>
        </authorList>
    </citation>
    <scope>NUCLEOTIDE SEQUENCE [LARGE SCALE GENOMIC DNA]</scope>
    <source>
        <strain>RIMD 2210633</strain>
    </source>
</reference>
<comment type="function">
    <text evidence="1">A GTPase-activating protein (GAP) that modifies Der/EngA GTPase function. May play a role in ribosome biogenesis.</text>
</comment>
<comment type="subunit">
    <text evidence="1">Interacts with Der.</text>
</comment>
<comment type="similarity">
    <text evidence="1">Belongs to the YihI family.</text>
</comment>
<organism>
    <name type="scientific">Vibrio parahaemolyticus serotype O3:K6 (strain RIMD 2210633)</name>
    <dbReference type="NCBI Taxonomy" id="223926"/>
    <lineage>
        <taxon>Bacteria</taxon>
        <taxon>Pseudomonadati</taxon>
        <taxon>Pseudomonadota</taxon>
        <taxon>Gammaproteobacteria</taxon>
        <taxon>Vibrionales</taxon>
        <taxon>Vibrionaceae</taxon>
        <taxon>Vibrio</taxon>
    </lineage>
</organism>
<keyword id="KW-0343">GTPase activation</keyword>
<keyword id="KW-0690">Ribosome biogenesis</keyword>
<evidence type="ECO:0000255" key="1">
    <source>
        <dbReference type="HAMAP-Rule" id="MF_01058"/>
    </source>
</evidence>
<evidence type="ECO:0000256" key="2">
    <source>
        <dbReference type="SAM" id="MobiDB-lite"/>
    </source>
</evidence>
<name>YIHI_VIBPA</name>
<sequence length="180" mass="20520">MSRKKKSRKPGAAGAPEFVVTRNRTESDVEGRLRKRAKKRKGLKTGSRNSEVNEQKKQSSEQNRDPRLGSKKKIPLIVEPVKKMTKQERRLSAEQELEMLENDAQLNVLLDRIEAGENLGTGLQKYVDEKLDRIEKLMDQLGLLEPEEEEDFTASSAKGSRNDDDLLADFDDINFDDYKG</sequence>